<name>APT_NEIMA</name>
<reference key="1">
    <citation type="journal article" date="2000" name="Nature">
        <title>Complete DNA sequence of a serogroup A strain of Neisseria meningitidis Z2491.</title>
        <authorList>
            <person name="Parkhill J."/>
            <person name="Achtman M."/>
            <person name="James K.D."/>
            <person name="Bentley S.D."/>
            <person name="Churcher C.M."/>
            <person name="Klee S.R."/>
            <person name="Morelli G."/>
            <person name="Basham D."/>
            <person name="Brown D."/>
            <person name="Chillingworth T."/>
            <person name="Davies R.M."/>
            <person name="Davis P."/>
            <person name="Devlin K."/>
            <person name="Feltwell T."/>
            <person name="Hamlin N."/>
            <person name="Holroyd S."/>
            <person name="Jagels K."/>
            <person name="Leather S."/>
            <person name="Moule S."/>
            <person name="Mungall K.L."/>
            <person name="Quail M.A."/>
            <person name="Rajandream M.A."/>
            <person name="Rutherford K.M."/>
            <person name="Simmonds M."/>
            <person name="Skelton J."/>
            <person name="Whitehead S."/>
            <person name="Spratt B.G."/>
            <person name="Barrell B.G."/>
        </authorList>
    </citation>
    <scope>NUCLEOTIDE SEQUENCE [LARGE SCALE GENOMIC DNA]</scope>
    <source>
        <strain>DSM 15465 / Z2491</strain>
    </source>
</reference>
<comment type="function">
    <text evidence="1">Catalyzes a salvage reaction resulting in the formation of AMP, that is energically less costly than de novo synthesis.</text>
</comment>
<comment type="catalytic activity">
    <reaction evidence="1">
        <text>AMP + diphosphate = 5-phospho-alpha-D-ribose 1-diphosphate + adenine</text>
        <dbReference type="Rhea" id="RHEA:16609"/>
        <dbReference type="ChEBI" id="CHEBI:16708"/>
        <dbReference type="ChEBI" id="CHEBI:33019"/>
        <dbReference type="ChEBI" id="CHEBI:58017"/>
        <dbReference type="ChEBI" id="CHEBI:456215"/>
        <dbReference type="EC" id="2.4.2.7"/>
    </reaction>
</comment>
<comment type="pathway">
    <text evidence="1">Purine metabolism; AMP biosynthesis via salvage pathway; AMP from adenine: step 1/1.</text>
</comment>
<comment type="subunit">
    <text evidence="1">Homodimer.</text>
</comment>
<comment type="subcellular location">
    <subcellularLocation>
        <location evidence="1">Cytoplasm</location>
    </subcellularLocation>
</comment>
<comment type="similarity">
    <text evidence="1">Belongs to the purine/pyrimidine phosphoribosyltransferase family.</text>
</comment>
<comment type="sequence caution" evidence="2">
    <conflict type="erroneous initiation">
        <sequence resource="EMBL-CDS" id="CAM09035"/>
    </conflict>
</comment>
<protein>
    <recommendedName>
        <fullName evidence="1">Adenine phosphoribosyltransferase</fullName>
        <shortName evidence="1">APRT</shortName>
        <ecNumber evidence="1">2.4.2.7</ecNumber>
    </recommendedName>
</protein>
<evidence type="ECO:0000255" key="1">
    <source>
        <dbReference type="HAMAP-Rule" id="MF_00004"/>
    </source>
</evidence>
<evidence type="ECO:0000305" key="2"/>
<dbReference type="EC" id="2.4.2.7" evidence="1"/>
<dbReference type="EMBL" id="AL157959">
    <property type="protein sequence ID" value="CAM09035.1"/>
    <property type="status" value="ALT_INIT"/>
    <property type="molecule type" value="Genomic_DNA"/>
</dbReference>
<dbReference type="SMR" id="Q9JT95"/>
<dbReference type="EnsemblBacteria" id="CAM09035">
    <property type="protein sequence ID" value="CAM09035"/>
    <property type="gene ID" value="NMA1920"/>
</dbReference>
<dbReference type="KEGG" id="nma:NMA1920"/>
<dbReference type="HOGENOM" id="CLU_063339_3_0_4"/>
<dbReference type="UniPathway" id="UPA00588">
    <property type="reaction ID" value="UER00646"/>
</dbReference>
<dbReference type="Proteomes" id="UP000000626">
    <property type="component" value="Chromosome"/>
</dbReference>
<dbReference type="GO" id="GO:0005737">
    <property type="term" value="C:cytoplasm"/>
    <property type="evidence" value="ECO:0007669"/>
    <property type="project" value="UniProtKB-SubCell"/>
</dbReference>
<dbReference type="GO" id="GO:0002055">
    <property type="term" value="F:adenine binding"/>
    <property type="evidence" value="ECO:0007669"/>
    <property type="project" value="TreeGrafter"/>
</dbReference>
<dbReference type="GO" id="GO:0003999">
    <property type="term" value="F:adenine phosphoribosyltransferase activity"/>
    <property type="evidence" value="ECO:0007669"/>
    <property type="project" value="UniProtKB-UniRule"/>
</dbReference>
<dbReference type="GO" id="GO:0016208">
    <property type="term" value="F:AMP binding"/>
    <property type="evidence" value="ECO:0007669"/>
    <property type="project" value="TreeGrafter"/>
</dbReference>
<dbReference type="GO" id="GO:0006168">
    <property type="term" value="P:adenine salvage"/>
    <property type="evidence" value="ECO:0007669"/>
    <property type="project" value="InterPro"/>
</dbReference>
<dbReference type="GO" id="GO:0044209">
    <property type="term" value="P:AMP salvage"/>
    <property type="evidence" value="ECO:0007669"/>
    <property type="project" value="UniProtKB-UniRule"/>
</dbReference>
<dbReference type="GO" id="GO:0006166">
    <property type="term" value="P:purine ribonucleoside salvage"/>
    <property type="evidence" value="ECO:0007669"/>
    <property type="project" value="UniProtKB-KW"/>
</dbReference>
<dbReference type="CDD" id="cd06223">
    <property type="entry name" value="PRTases_typeI"/>
    <property type="match status" value="1"/>
</dbReference>
<dbReference type="FunFam" id="3.40.50.2020:FF:000021">
    <property type="entry name" value="Adenine phosphoribosyltransferase"/>
    <property type="match status" value="1"/>
</dbReference>
<dbReference type="Gene3D" id="3.40.50.2020">
    <property type="match status" value="1"/>
</dbReference>
<dbReference type="HAMAP" id="MF_00004">
    <property type="entry name" value="Aden_phosphoribosyltr"/>
    <property type="match status" value="1"/>
</dbReference>
<dbReference type="InterPro" id="IPR005764">
    <property type="entry name" value="Ade_phspho_trans"/>
</dbReference>
<dbReference type="InterPro" id="IPR000836">
    <property type="entry name" value="PRibTrfase_dom"/>
</dbReference>
<dbReference type="InterPro" id="IPR029057">
    <property type="entry name" value="PRTase-like"/>
</dbReference>
<dbReference type="InterPro" id="IPR050054">
    <property type="entry name" value="UPRTase/APRTase"/>
</dbReference>
<dbReference type="NCBIfam" id="TIGR01090">
    <property type="entry name" value="apt"/>
    <property type="match status" value="1"/>
</dbReference>
<dbReference type="NCBIfam" id="NF002634">
    <property type="entry name" value="PRK02304.1-3"/>
    <property type="match status" value="1"/>
</dbReference>
<dbReference type="NCBIfam" id="NF002636">
    <property type="entry name" value="PRK02304.1-5"/>
    <property type="match status" value="1"/>
</dbReference>
<dbReference type="PANTHER" id="PTHR32315">
    <property type="entry name" value="ADENINE PHOSPHORIBOSYLTRANSFERASE"/>
    <property type="match status" value="1"/>
</dbReference>
<dbReference type="PANTHER" id="PTHR32315:SF3">
    <property type="entry name" value="ADENINE PHOSPHORIBOSYLTRANSFERASE"/>
    <property type="match status" value="1"/>
</dbReference>
<dbReference type="Pfam" id="PF00156">
    <property type="entry name" value="Pribosyltran"/>
    <property type="match status" value="1"/>
</dbReference>
<dbReference type="SUPFAM" id="SSF53271">
    <property type="entry name" value="PRTase-like"/>
    <property type="match status" value="1"/>
</dbReference>
<dbReference type="PROSITE" id="PS00103">
    <property type="entry name" value="PUR_PYR_PR_TRANSFER"/>
    <property type="match status" value="1"/>
</dbReference>
<keyword id="KW-0963">Cytoplasm</keyword>
<keyword id="KW-0328">Glycosyltransferase</keyword>
<keyword id="KW-0660">Purine salvage</keyword>
<keyword id="KW-0808">Transferase</keyword>
<gene>
    <name evidence="1" type="primary">apt</name>
    <name type="ordered locus">NMA1920</name>
</gene>
<proteinExistence type="inferred from homology"/>
<organism>
    <name type="scientific">Neisseria meningitidis serogroup A / serotype 4A (strain DSM 15465 / Z2491)</name>
    <dbReference type="NCBI Taxonomy" id="122587"/>
    <lineage>
        <taxon>Bacteria</taxon>
        <taxon>Pseudomonadati</taxon>
        <taxon>Pseudomonadota</taxon>
        <taxon>Betaproteobacteria</taxon>
        <taxon>Neisseriales</taxon>
        <taxon>Neisseriaceae</taxon>
        <taxon>Neisseria</taxon>
    </lineage>
</organism>
<accession>Q9JT95</accession>
<accession>A1ITC2</accession>
<feature type="chain" id="PRO_0000149421" description="Adenine phosphoribosyltransferase">
    <location>
        <begin position="1"/>
        <end position="188"/>
    </location>
</feature>
<sequence>MLVHPEAMSVGALADKIRKIENWPQKGILFHDITPVLQSAEYFRLLVDLLVYRYMDQKIDIVAGLDARGFIIGAALAYQLNVGFVPIRKKGKLPFETVSQSYALEYGEAAVEIHTDAVKLGSRVLLVDDLVATGGTMLAGLELIRKLGGEIVEAAAILEFTDLQGGKNIRASGAPLFTLLQNEGCMKG</sequence>